<proteinExistence type="inferred from homology"/>
<organism>
    <name type="scientific">Escherichia coli O1:K1 / APEC</name>
    <dbReference type="NCBI Taxonomy" id="405955"/>
    <lineage>
        <taxon>Bacteria</taxon>
        <taxon>Pseudomonadati</taxon>
        <taxon>Pseudomonadota</taxon>
        <taxon>Gammaproteobacteria</taxon>
        <taxon>Enterobacterales</taxon>
        <taxon>Enterobacteriaceae</taxon>
        <taxon>Escherichia</taxon>
    </lineage>
</organism>
<sequence length="309" mass="34719">MSIRIIPQDELGSSEKRTADMIPPLLFPRLKNLYNRRAERLRELAENNPLGDYLRFAALIAHAQEVVLYDHPLEMDLTTRIKEASAQGKPPLDIHVLPRDKHWQKLLMALIAELKPEMSGPALAVIENLEKASTQELEDMASALFASDFSSVSSDKAPFIWAALSLYWAQMANLIPGKARAEYGEQRQYCPVCGSMPVSSMVQIGTTQGLRYLHCNLCETEWHVVRVKCSNCEQSGKLHYWSLDDEQAAIKAESCDDCGTYLKILYQEKEPKVEAVADDLASLVLDARMEQEGYARSSINPFLFPGEGE</sequence>
<protein>
    <recommendedName>
        <fullName evidence="1">Protein FdhE</fullName>
    </recommendedName>
</protein>
<feature type="chain" id="PRO_1000056699" description="Protein FdhE">
    <location>
        <begin position="1"/>
        <end position="309"/>
    </location>
</feature>
<keyword id="KW-0963">Cytoplasm</keyword>
<keyword id="KW-1185">Reference proteome</keyword>
<evidence type="ECO:0000255" key="1">
    <source>
        <dbReference type="HAMAP-Rule" id="MF_00611"/>
    </source>
</evidence>
<reference key="1">
    <citation type="journal article" date="2007" name="J. Bacteriol.">
        <title>The genome sequence of avian pathogenic Escherichia coli strain O1:K1:H7 shares strong similarities with human extraintestinal pathogenic E. coli genomes.</title>
        <authorList>
            <person name="Johnson T.J."/>
            <person name="Kariyawasam S."/>
            <person name="Wannemuehler Y."/>
            <person name="Mangiamele P."/>
            <person name="Johnson S.J."/>
            <person name="Doetkott C."/>
            <person name="Skyberg J.A."/>
            <person name="Lynne A.M."/>
            <person name="Johnson J.R."/>
            <person name="Nolan L.K."/>
        </authorList>
    </citation>
    <scope>NUCLEOTIDE SEQUENCE [LARGE SCALE GENOMIC DNA]</scope>
</reference>
<gene>
    <name evidence="1" type="primary">fdhE</name>
    <name type="ordered locus">Ecok1_38660</name>
    <name type="ORF">APECO1_2574</name>
</gene>
<name>FDHE_ECOK1</name>
<accession>A1AI70</accession>
<dbReference type="EMBL" id="CP000468">
    <property type="protein sequence ID" value="ABJ03360.1"/>
    <property type="molecule type" value="Genomic_DNA"/>
</dbReference>
<dbReference type="RefSeq" id="WP_000027720.1">
    <property type="nucleotide sequence ID" value="NZ_CADILS010000014.1"/>
</dbReference>
<dbReference type="SMR" id="A1AI70"/>
<dbReference type="KEGG" id="ecv:APECO1_2574"/>
<dbReference type="HOGENOM" id="CLU_055275_0_0_6"/>
<dbReference type="Proteomes" id="UP000008216">
    <property type="component" value="Chromosome"/>
</dbReference>
<dbReference type="GO" id="GO:0005829">
    <property type="term" value="C:cytosol"/>
    <property type="evidence" value="ECO:0007669"/>
    <property type="project" value="TreeGrafter"/>
</dbReference>
<dbReference type="GO" id="GO:0008199">
    <property type="term" value="F:ferric iron binding"/>
    <property type="evidence" value="ECO:0007669"/>
    <property type="project" value="TreeGrafter"/>
</dbReference>
<dbReference type="GO" id="GO:0051604">
    <property type="term" value="P:protein maturation"/>
    <property type="evidence" value="ECO:0007669"/>
    <property type="project" value="TreeGrafter"/>
</dbReference>
<dbReference type="CDD" id="cd16341">
    <property type="entry name" value="FdhE"/>
    <property type="match status" value="1"/>
</dbReference>
<dbReference type="FunFam" id="3.90.1670.10:FF:000001">
    <property type="entry name" value="Protein FdhE"/>
    <property type="match status" value="1"/>
</dbReference>
<dbReference type="Gene3D" id="3.90.1670.10">
    <property type="entry name" value="FdhE-like domain"/>
    <property type="match status" value="1"/>
</dbReference>
<dbReference type="HAMAP" id="MF_00611">
    <property type="entry name" value="FdeH"/>
    <property type="match status" value="1"/>
</dbReference>
<dbReference type="InterPro" id="IPR024064">
    <property type="entry name" value="FdhE-like_sf"/>
</dbReference>
<dbReference type="InterPro" id="IPR056796">
    <property type="entry name" value="FdhE_C"/>
</dbReference>
<dbReference type="InterPro" id="IPR056797">
    <property type="entry name" value="FdhE_central"/>
</dbReference>
<dbReference type="InterPro" id="IPR056774">
    <property type="entry name" value="FdhE_N"/>
</dbReference>
<dbReference type="InterPro" id="IPR006452">
    <property type="entry name" value="Formate_DH_accessory"/>
</dbReference>
<dbReference type="NCBIfam" id="TIGR01562">
    <property type="entry name" value="FdhE"/>
    <property type="match status" value="1"/>
</dbReference>
<dbReference type="NCBIfam" id="NF002925">
    <property type="entry name" value="PRK03564.1"/>
    <property type="match status" value="1"/>
</dbReference>
<dbReference type="PANTHER" id="PTHR37689">
    <property type="entry name" value="PROTEIN FDHE"/>
    <property type="match status" value="1"/>
</dbReference>
<dbReference type="PANTHER" id="PTHR37689:SF1">
    <property type="entry name" value="PROTEIN FDHE"/>
    <property type="match status" value="1"/>
</dbReference>
<dbReference type="Pfam" id="PF24860">
    <property type="entry name" value="FdhE_C"/>
    <property type="match status" value="1"/>
</dbReference>
<dbReference type="Pfam" id="PF24859">
    <property type="entry name" value="FdhE_central"/>
    <property type="match status" value="1"/>
</dbReference>
<dbReference type="Pfam" id="PF04216">
    <property type="entry name" value="FdhE_N"/>
    <property type="match status" value="1"/>
</dbReference>
<dbReference type="PIRSF" id="PIRSF018296">
    <property type="entry name" value="Format_dh_formtn"/>
    <property type="match status" value="1"/>
</dbReference>
<dbReference type="SUPFAM" id="SSF144020">
    <property type="entry name" value="FdhE-like"/>
    <property type="match status" value="1"/>
</dbReference>
<comment type="function">
    <text evidence="1">Necessary for formate dehydrogenase activity.</text>
</comment>
<comment type="subcellular location">
    <subcellularLocation>
        <location evidence="1">Cytoplasm</location>
    </subcellularLocation>
</comment>
<comment type="similarity">
    <text evidence="1">Belongs to the FdhE family.</text>
</comment>